<protein>
    <recommendedName>
        <fullName evidence="1">Acyl-[acyl-carrier-protein]--UDP-N-acetylglucosamine O-acyltransferase</fullName>
        <shortName evidence="1">UDP-N-acetylglucosamine acyltransferase</shortName>
        <ecNumber evidence="1">2.3.1.129</ecNumber>
    </recommendedName>
</protein>
<name>LPXA_BRUSI</name>
<reference key="1">
    <citation type="submission" date="2007-12" db="EMBL/GenBank/DDBJ databases">
        <title>Brucella suis ATCC 23445 whole genome shotgun sequencing project.</title>
        <authorList>
            <person name="Setubal J.C."/>
            <person name="Bowns C."/>
            <person name="Boyle S."/>
            <person name="Crasta O.R."/>
            <person name="Czar M.J."/>
            <person name="Dharmanolla C."/>
            <person name="Gillespie J.J."/>
            <person name="Kenyon R.W."/>
            <person name="Lu J."/>
            <person name="Mane S."/>
            <person name="Mohapatra S."/>
            <person name="Nagrani S."/>
            <person name="Purkayastha A."/>
            <person name="Rajasimha H.K."/>
            <person name="Shallom J.M."/>
            <person name="Shallom S."/>
            <person name="Shukla M."/>
            <person name="Snyder E.E."/>
            <person name="Sobral B.W."/>
            <person name="Wattam A.R."/>
            <person name="Will R."/>
            <person name="Williams K."/>
            <person name="Yoo H."/>
            <person name="Bruce D."/>
            <person name="Detter C."/>
            <person name="Munk C."/>
            <person name="Brettin T.S."/>
        </authorList>
    </citation>
    <scope>NUCLEOTIDE SEQUENCE [LARGE SCALE GENOMIC DNA]</scope>
    <source>
        <strain>ATCC 23445 / NCTC 10510</strain>
    </source>
</reference>
<accession>B0CGU9</accession>
<comment type="function">
    <text evidence="1">Involved in the biosynthesis of lipid A, a phosphorylated glycolipid that anchors the lipopolysaccharide to the outer membrane of the cell.</text>
</comment>
<comment type="catalytic activity">
    <reaction evidence="1">
        <text>a (3R)-hydroxyacyl-[ACP] + UDP-N-acetyl-alpha-D-glucosamine = a UDP-3-O-[(3R)-3-hydroxyacyl]-N-acetyl-alpha-D-glucosamine + holo-[ACP]</text>
        <dbReference type="Rhea" id="RHEA:67812"/>
        <dbReference type="Rhea" id="RHEA-COMP:9685"/>
        <dbReference type="Rhea" id="RHEA-COMP:9945"/>
        <dbReference type="ChEBI" id="CHEBI:57705"/>
        <dbReference type="ChEBI" id="CHEBI:64479"/>
        <dbReference type="ChEBI" id="CHEBI:78827"/>
        <dbReference type="ChEBI" id="CHEBI:173225"/>
        <dbReference type="EC" id="2.3.1.129"/>
    </reaction>
</comment>
<comment type="pathway">
    <text evidence="1">Glycolipid biosynthesis; lipid IV(A) biosynthesis; lipid IV(A) from (3R)-3-hydroxytetradecanoyl-[acyl-carrier-protein] and UDP-N-acetyl-alpha-D-glucosamine: step 1/6.</text>
</comment>
<comment type="subunit">
    <text evidence="1">Homotrimer.</text>
</comment>
<comment type="subcellular location">
    <subcellularLocation>
        <location evidence="1">Cytoplasm</location>
    </subcellularLocation>
</comment>
<comment type="similarity">
    <text evidence="1">Belongs to the transferase hexapeptide repeat family. LpxA subfamily.</text>
</comment>
<gene>
    <name evidence="1" type="primary">lpxA</name>
    <name type="ordered locus">BSUIS_A1199</name>
</gene>
<sequence>MKETFIHPTALVEPGVELGQGVSVGPFCHVQSGAIIGNDCELMSHVVITGATTLGAGTKVYPHAILGCDPQNNKHKGGPTRLNVGVNCIIREGVTMHKGSDNARGYTSIGDNCSFLAYAHVAHDCDIGDYVTFSNNVMIGGHTSIGHHAILGGGAAVHQFVRVGHHAFIGGLAAVVSDLIPYGMAIGVHAHLGGLNIIGMKRSGMERKEIHNLRHAVRMLFDRTKPIRQRAQDVLAAIPDSPTVSDMISFINVDTKRAYCTPPLDAAHGGAGHDSDED</sequence>
<keyword id="KW-0012">Acyltransferase</keyword>
<keyword id="KW-0963">Cytoplasm</keyword>
<keyword id="KW-0441">Lipid A biosynthesis</keyword>
<keyword id="KW-0444">Lipid biosynthesis</keyword>
<keyword id="KW-0443">Lipid metabolism</keyword>
<keyword id="KW-0677">Repeat</keyword>
<keyword id="KW-0808">Transferase</keyword>
<feature type="chain" id="PRO_1000080206" description="Acyl-[acyl-carrier-protein]--UDP-N-acetylglucosamine O-acyltransferase">
    <location>
        <begin position="1"/>
        <end position="278"/>
    </location>
</feature>
<proteinExistence type="inferred from homology"/>
<organism>
    <name type="scientific">Brucella suis (strain ATCC 23445 / NCTC 10510)</name>
    <dbReference type="NCBI Taxonomy" id="470137"/>
    <lineage>
        <taxon>Bacteria</taxon>
        <taxon>Pseudomonadati</taxon>
        <taxon>Pseudomonadota</taxon>
        <taxon>Alphaproteobacteria</taxon>
        <taxon>Hyphomicrobiales</taxon>
        <taxon>Brucellaceae</taxon>
        <taxon>Brucella/Ochrobactrum group</taxon>
        <taxon>Brucella</taxon>
    </lineage>
</organism>
<evidence type="ECO:0000255" key="1">
    <source>
        <dbReference type="HAMAP-Rule" id="MF_00387"/>
    </source>
</evidence>
<dbReference type="EC" id="2.3.1.129" evidence="1"/>
<dbReference type="EMBL" id="CP000911">
    <property type="protein sequence ID" value="ABY38250.1"/>
    <property type="molecule type" value="Genomic_DNA"/>
</dbReference>
<dbReference type="RefSeq" id="WP_002964279.1">
    <property type="nucleotide sequence ID" value="NC_010169.1"/>
</dbReference>
<dbReference type="SMR" id="B0CGU9"/>
<dbReference type="GeneID" id="97533598"/>
<dbReference type="KEGG" id="bmt:BSUIS_A1199"/>
<dbReference type="HOGENOM" id="CLU_061249_0_0_5"/>
<dbReference type="UniPathway" id="UPA00359">
    <property type="reaction ID" value="UER00477"/>
</dbReference>
<dbReference type="Proteomes" id="UP000008545">
    <property type="component" value="Chromosome I"/>
</dbReference>
<dbReference type="GO" id="GO:0005737">
    <property type="term" value="C:cytoplasm"/>
    <property type="evidence" value="ECO:0007669"/>
    <property type="project" value="UniProtKB-SubCell"/>
</dbReference>
<dbReference type="GO" id="GO:0016020">
    <property type="term" value="C:membrane"/>
    <property type="evidence" value="ECO:0007669"/>
    <property type="project" value="GOC"/>
</dbReference>
<dbReference type="GO" id="GO:0008780">
    <property type="term" value="F:acyl-[acyl-carrier-protein]-UDP-N-acetylglucosamine O-acyltransferase activity"/>
    <property type="evidence" value="ECO:0007669"/>
    <property type="project" value="UniProtKB-UniRule"/>
</dbReference>
<dbReference type="GO" id="GO:0009245">
    <property type="term" value="P:lipid A biosynthetic process"/>
    <property type="evidence" value="ECO:0007669"/>
    <property type="project" value="UniProtKB-UniRule"/>
</dbReference>
<dbReference type="CDD" id="cd03351">
    <property type="entry name" value="LbH_UDP-GlcNAc_AT"/>
    <property type="match status" value="1"/>
</dbReference>
<dbReference type="Gene3D" id="2.160.10.10">
    <property type="entry name" value="Hexapeptide repeat proteins"/>
    <property type="match status" value="1"/>
</dbReference>
<dbReference type="Gene3D" id="1.20.1180.10">
    <property type="entry name" value="Udp N-acetylglucosamine O-acyltransferase, C-terminal domain"/>
    <property type="match status" value="1"/>
</dbReference>
<dbReference type="HAMAP" id="MF_00387">
    <property type="entry name" value="LpxA"/>
    <property type="match status" value="1"/>
</dbReference>
<dbReference type="InterPro" id="IPR029098">
    <property type="entry name" value="Acetyltransf_C"/>
</dbReference>
<dbReference type="InterPro" id="IPR037157">
    <property type="entry name" value="Acetyltransf_C_sf"/>
</dbReference>
<dbReference type="InterPro" id="IPR001451">
    <property type="entry name" value="Hexapep"/>
</dbReference>
<dbReference type="InterPro" id="IPR018357">
    <property type="entry name" value="Hexapep_transf_CS"/>
</dbReference>
<dbReference type="InterPro" id="IPR010137">
    <property type="entry name" value="Lipid_A_LpxA"/>
</dbReference>
<dbReference type="InterPro" id="IPR011004">
    <property type="entry name" value="Trimer_LpxA-like_sf"/>
</dbReference>
<dbReference type="NCBIfam" id="TIGR01852">
    <property type="entry name" value="lipid_A_lpxA"/>
    <property type="match status" value="1"/>
</dbReference>
<dbReference type="NCBIfam" id="NF003657">
    <property type="entry name" value="PRK05289.1"/>
    <property type="match status" value="1"/>
</dbReference>
<dbReference type="PANTHER" id="PTHR43480">
    <property type="entry name" value="ACYL-[ACYL-CARRIER-PROTEIN]--UDP-N-ACETYLGLUCOSAMINE O-ACYLTRANSFERASE"/>
    <property type="match status" value="1"/>
</dbReference>
<dbReference type="PANTHER" id="PTHR43480:SF1">
    <property type="entry name" value="ACYL-[ACYL-CARRIER-PROTEIN]--UDP-N-ACETYLGLUCOSAMINE O-ACYLTRANSFERASE, MITOCHONDRIAL-RELATED"/>
    <property type="match status" value="1"/>
</dbReference>
<dbReference type="Pfam" id="PF13720">
    <property type="entry name" value="Acetyltransf_11"/>
    <property type="match status" value="1"/>
</dbReference>
<dbReference type="Pfam" id="PF00132">
    <property type="entry name" value="Hexapep"/>
    <property type="match status" value="2"/>
</dbReference>
<dbReference type="PIRSF" id="PIRSF000456">
    <property type="entry name" value="UDP-GlcNAc_acltr"/>
    <property type="match status" value="1"/>
</dbReference>
<dbReference type="SUPFAM" id="SSF51161">
    <property type="entry name" value="Trimeric LpxA-like enzymes"/>
    <property type="match status" value="1"/>
</dbReference>
<dbReference type="PROSITE" id="PS00101">
    <property type="entry name" value="HEXAPEP_TRANSFERASES"/>
    <property type="match status" value="1"/>
</dbReference>